<proteinExistence type="evidence at protein level"/>
<keyword id="KW-0002">3D-structure</keyword>
<keyword id="KW-1003">Cell membrane</keyword>
<keyword id="KW-0444">Lipid biosynthesis</keyword>
<keyword id="KW-0443">Lipid metabolism</keyword>
<keyword id="KW-0460">Magnesium</keyword>
<keyword id="KW-0472">Membrane</keyword>
<keyword id="KW-0479">Metal-binding</keyword>
<keyword id="KW-0594">Phospholipid biosynthesis</keyword>
<keyword id="KW-1208">Phospholipid metabolism</keyword>
<keyword id="KW-1185">Reference proteome</keyword>
<keyword id="KW-0808">Transferase</keyword>
<keyword id="KW-0812">Transmembrane</keyword>
<keyword id="KW-1133">Transmembrane helix</keyword>
<organism>
    <name type="scientific">Mycobacterium tuberculosis (strain ATCC 25618 / H37Rv)</name>
    <dbReference type="NCBI Taxonomy" id="83332"/>
    <lineage>
        <taxon>Bacteria</taxon>
        <taxon>Bacillati</taxon>
        <taxon>Actinomycetota</taxon>
        <taxon>Actinomycetes</taxon>
        <taxon>Mycobacteriales</taxon>
        <taxon>Mycobacteriaceae</taxon>
        <taxon>Mycobacterium</taxon>
        <taxon>Mycobacterium tuberculosis complex</taxon>
    </lineage>
</organism>
<dbReference type="EC" id="2.7.8.-" evidence="2 3"/>
<dbReference type="EMBL" id="AL123456">
    <property type="protein sequence ID" value="CCP45409.1"/>
    <property type="molecule type" value="Genomic_DNA"/>
</dbReference>
<dbReference type="PIR" id="C70571">
    <property type="entry name" value="C70571"/>
</dbReference>
<dbReference type="RefSeq" id="WP_003413482.1">
    <property type="nucleotide sequence ID" value="NZ_NVQJ01000023.1"/>
</dbReference>
<dbReference type="RefSeq" id="YP_177894.1">
    <property type="nucleotide sequence ID" value="NC_000962.3"/>
</dbReference>
<dbReference type="PDB" id="6H53">
    <property type="method" value="X-ray"/>
    <property type="resolution" value="2.90 A"/>
    <property type="chains" value="A/B=1-217"/>
</dbReference>
<dbReference type="PDB" id="6H59">
    <property type="method" value="X-ray"/>
    <property type="resolution" value="1.80 A"/>
    <property type="chains" value="A/B=1-217"/>
</dbReference>
<dbReference type="PDB" id="6H5A">
    <property type="method" value="X-ray"/>
    <property type="resolution" value="1.88 A"/>
    <property type="chains" value="A/B=1-217"/>
</dbReference>
<dbReference type="PDBsum" id="6H53"/>
<dbReference type="PDBsum" id="6H59"/>
<dbReference type="PDBsum" id="6H5A"/>
<dbReference type="SMR" id="P9WPG7"/>
<dbReference type="STRING" id="83332.Rv2612c"/>
<dbReference type="PaxDb" id="83332-Rv2612c"/>
<dbReference type="DNASU" id="888209"/>
<dbReference type="GeneID" id="888209"/>
<dbReference type="KEGG" id="mtu:Rv2612c"/>
<dbReference type="KEGG" id="mtv:RVBD_2612c"/>
<dbReference type="TubercuList" id="Rv2612c"/>
<dbReference type="eggNOG" id="COG0558">
    <property type="taxonomic scope" value="Bacteria"/>
</dbReference>
<dbReference type="InParanoid" id="P9WPG7"/>
<dbReference type="OrthoDB" id="116551at2"/>
<dbReference type="PhylomeDB" id="P9WPG7"/>
<dbReference type="BioCyc" id="MetaCyc:G185E-6855-MONOMER"/>
<dbReference type="BRENDA" id="2.7.8.B13">
    <property type="organism ID" value="3445"/>
</dbReference>
<dbReference type="UniPathway" id="UPA00220"/>
<dbReference type="Proteomes" id="UP000001584">
    <property type="component" value="Chromosome"/>
</dbReference>
<dbReference type="GO" id="GO:0009274">
    <property type="term" value="C:peptidoglycan-based cell wall"/>
    <property type="evidence" value="ECO:0000314"/>
    <property type="project" value="UniProtKB"/>
</dbReference>
<dbReference type="GO" id="GO:0005886">
    <property type="term" value="C:plasma membrane"/>
    <property type="evidence" value="ECO:0007669"/>
    <property type="project" value="UniProtKB-SubCell"/>
</dbReference>
<dbReference type="GO" id="GO:0003881">
    <property type="term" value="F:CDP-diacylglycerol-inositol 3-phosphatidyltransferase activity"/>
    <property type="evidence" value="ECO:0000314"/>
    <property type="project" value="UniProtKB"/>
</dbReference>
<dbReference type="GO" id="GO:0000287">
    <property type="term" value="F:magnesium ion binding"/>
    <property type="evidence" value="ECO:0007669"/>
    <property type="project" value="UniProtKB-UniRule"/>
</dbReference>
<dbReference type="GO" id="GO:0046474">
    <property type="term" value="P:glycerophospholipid biosynthetic process"/>
    <property type="evidence" value="ECO:0000315"/>
    <property type="project" value="MTBBASE"/>
</dbReference>
<dbReference type="GO" id="GO:0008654">
    <property type="term" value="P:phospholipid biosynthetic process"/>
    <property type="evidence" value="ECO:0000314"/>
    <property type="project" value="UniProtKB"/>
</dbReference>
<dbReference type="FunFam" id="1.20.120.1760:FF:000024">
    <property type="entry name" value="Probable phosphatidylinositol synthase pgsA1"/>
    <property type="match status" value="1"/>
</dbReference>
<dbReference type="Gene3D" id="1.20.120.1760">
    <property type="match status" value="1"/>
</dbReference>
<dbReference type="HAMAP" id="MF_02241">
    <property type="entry name" value="PIP_synthase"/>
    <property type="match status" value="1"/>
</dbReference>
<dbReference type="InterPro" id="IPR000462">
    <property type="entry name" value="CDP-OH_P_trans"/>
</dbReference>
<dbReference type="InterPro" id="IPR043130">
    <property type="entry name" value="CDP-OH_PTrfase_TM_dom"/>
</dbReference>
<dbReference type="InterPro" id="IPR048254">
    <property type="entry name" value="CDP_ALCOHOL_P_TRANSF_CS"/>
</dbReference>
<dbReference type="InterPro" id="IPR044268">
    <property type="entry name" value="PIP_synthase_PgsA1"/>
</dbReference>
<dbReference type="NCBIfam" id="NF045883">
    <property type="entry name" value="PIPSynth"/>
    <property type="match status" value="1"/>
</dbReference>
<dbReference type="Pfam" id="PF01066">
    <property type="entry name" value="CDP-OH_P_transf"/>
    <property type="match status" value="1"/>
</dbReference>
<dbReference type="PROSITE" id="PS00379">
    <property type="entry name" value="CDP_ALCOHOL_P_TRANSF"/>
    <property type="match status" value="1"/>
</dbReference>
<sequence>MSKLPFLSRAAFARITTPIARGLLRVGLTPDVVTILGTTASVAGALTLFPMGKLFAGACVVWFFVLFDMLDGAMARERGGGTRFGAVLDATCDRISDGAVFCGLLWWIAFHMRDRPLVIATLICLVTSQVISYIKARAEASGLRGDGGFIERPERLIIVLTGAGVSDFPFVPWPPALSVGMWLLAVASVITCVQRLHTVWTSPGAIDRMAIPGKGDR</sequence>
<feature type="chain" id="PRO_0000393108" description="Phosphatidylinositol phosphate synthase">
    <location>
        <begin position="1"/>
        <end position="217"/>
    </location>
</feature>
<feature type="transmembrane region" description="Helical" evidence="3">
    <location>
        <begin position="30"/>
        <end position="48"/>
    </location>
</feature>
<feature type="transmembrane region" description="Helical" evidence="3">
    <location>
        <begin position="54"/>
        <end position="77"/>
    </location>
</feature>
<feature type="transmembrane region" description="Helical" evidence="3">
    <location>
        <begin position="83"/>
        <end position="110"/>
    </location>
</feature>
<feature type="transmembrane region" description="Helical" evidence="3">
    <location>
        <begin position="115"/>
        <end position="140"/>
    </location>
</feature>
<feature type="transmembrane region" description="Helical" evidence="3">
    <location>
        <begin position="152"/>
        <end position="166"/>
    </location>
</feature>
<feature type="transmembrane region" description="Helical" evidence="3">
    <location>
        <begin position="176"/>
        <end position="200"/>
    </location>
</feature>
<feature type="active site" description="Proton acceptor" evidence="8">
    <location>
        <position position="93"/>
    </location>
</feature>
<feature type="binding site" evidence="3">
    <location>
        <begin position="31"/>
        <end position="34"/>
    </location>
    <ligand>
        <name>a CDP-1,2-diacyl-sn-glycerol</name>
        <dbReference type="ChEBI" id="CHEBI:58332"/>
    </ligand>
</feature>
<feature type="binding site" evidence="3">
    <location>
        <position position="68"/>
    </location>
    <ligand>
        <name>Mg(2+)</name>
        <dbReference type="ChEBI" id="CHEBI:18420"/>
        <label>1</label>
    </ligand>
</feature>
<feature type="binding site" evidence="3">
    <location>
        <position position="68"/>
    </location>
    <ligand>
        <name>Mg(2+)</name>
        <dbReference type="ChEBI" id="CHEBI:18420"/>
        <label>2</label>
    </ligand>
</feature>
<feature type="binding site" evidence="3">
    <location>
        <position position="71"/>
    </location>
    <ligand>
        <name>Mg(2+)</name>
        <dbReference type="ChEBI" id="CHEBI:18420"/>
        <label>1</label>
    </ligand>
</feature>
<feature type="binding site" evidence="3">
    <location>
        <position position="72"/>
    </location>
    <ligand>
        <name>a CDP-1,2-diacyl-sn-glycerol</name>
        <dbReference type="ChEBI" id="CHEBI:58332"/>
    </ligand>
</feature>
<feature type="binding site" evidence="3">
    <location>
        <position position="76"/>
    </location>
    <ligand>
        <name>a CDP-1,2-diacyl-sn-glycerol</name>
        <dbReference type="ChEBI" id="CHEBI:58332"/>
    </ligand>
</feature>
<feature type="binding site" evidence="3">
    <location>
        <position position="82"/>
    </location>
    <ligand>
        <name>a CDP-1,2-diacyl-sn-glycerol</name>
        <dbReference type="ChEBI" id="CHEBI:58332"/>
    </ligand>
</feature>
<feature type="binding site" evidence="3">
    <location>
        <position position="89"/>
    </location>
    <ligand>
        <name>Mg(2+)</name>
        <dbReference type="ChEBI" id="CHEBI:18420"/>
        <label>1</label>
    </ligand>
</feature>
<feature type="binding site" evidence="3">
    <location>
        <position position="89"/>
    </location>
    <ligand>
        <name>Mg(2+)</name>
        <dbReference type="ChEBI" id="CHEBI:18420"/>
        <label>2</label>
    </ligand>
</feature>
<feature type="binding site" evidence="3">
    <location>
        <position position="93"/>
    </location>
    <ligand>
        <name>Mg(2+)</name>
        <dbReference type="ChEBI" id="CHEBI:18420"/>
        <label>2</label>
    </ligand>
</feature>
<feature type="mutagenesis site" description="Large decrease in catalytic activity." evidence="3">
    <original>A</original>
    <variation>Y</variation>
    <location>
        <position position="90"/>
    </location>
</feature>
<feature type="mutagenesis site" description="Large decrease in catalytic activity." evidence="3">
    <original>R</original>
    <variation>K</variation>
    <location>
        <position position="94"/>
    </location>
</feature>
<feature type="mutagenesis site" description="Almost loss of catalytic activity." evidence="3">
    <original>R</original>
    <variation>Q</variation>
    <location>
        <position position="94"/>
    </location>
</feature>
<feature type="mutagenesis site" description="Almost loss of catalytic activity." evidence="3">
    <original>Y</original>
    <variation>E</variation>
    <location>
        <position position="133"/>
    </location>
</feature>
<feature type="mutagenesis site" description="No change in catalytic activity." evidence="3">
    <original>Y</original>
    <variation>F</variation>
    <location>
        <position position="133"/>
    </location>
</feature>
<feature type="mutagenesis site" description="No change in catalytic activity." evidence="3">
    <original>R</original>
    <variation>K</variation>
    <location>
        <position position="137"/>
    </location>
</feature>
<feature type="mutagenesis site" description="2-fold decrease in catalytic activity." evidence="3">
    <original>R</original>
    <variation>Q</variation>
    <location>
        <position position="137"/>
    </location>
</feature>
<feature type="helix" evidence="14">
    <location>
        <begin position="9"/>
        <end position="12"/>
    </location>
</feature>
<feature type="turn" evidence="14">
    <location>
        <begin position="13"/>
        <end position="15"/>
    </location>
</feature>
<feature type="helix" evidence="13">
    <location>
        <begin position="16"/>
        <end position="26"/>
    </location>
</feature>
<feature type="helix" evidence="13">
    <location>
        <begin position="30"/>
        <end position="48"/>
    </location>
</feature>
<feature type="helix" evidence="13">
    <location>
        <begin position="49"/>
        <end position="51"/>
    </location>
</feature>
<feature type="helix" evidence="13">
    <location>
        <begin position="54"/>
        <end position="67"/>
    </location>
</feature>
<feature type="helix" evidence="13">
    <location>
        <begin position="69"/>
        <end position="77"/>
    </location>
</feature>
<feature type="helix" evidence="13">
    <location>
        <begin position="83"/>
        <end position="110"/>
    </location>
</feature>
<feature type="helix" evidence="13">
    <location>
        <begin position="115"/>
        <end position="140"/>
    </location>
</feature>
<feature type="helix" evidence="13">
    <location>
        <begin position="152"/>
        <end position="166"/>
    </location>
</feature>
<feature type="strand" evidence="13">
    <location>
        <begin position="169"/>
        <end position="171"/>
    </location>
</feature>
<feature type="helix" evidence="13">
    <location>
        <begin position="176"/>
        <end position="200"/>
    </location>
</feature>
<feature type="turn" evidence="13">
    <location>
        <begin position="203"/>
        <end position="206"/>
    </location>
</feature>
<feature type="turn" evidence="14">
    <location>
        <begin position="215"/>
        <end position="217"/>
    </location>
</feature>
<accession>P9WPG7</accession>
<accession>L0TBS2</accession>
<accession>Q79FC5</accession>
<accession>Q7D6W6</accession>
<reference key="1">
    <citation type="journal article" date="1998" name="Nature">
        <title>Deciphering the biology of Mycobacterium tuberculosis from the complete genome sequence.</title>
        <authorList>
            <person name="Cole S.T."/>
            <person name="Brosch R."/>
            <person name="Parkhill J."/>
            <person name="Garnier T."/>
            <person name="Churcher C.M."/>
            <person name="Harris D.E."/>
            <person name="Gordon S.V."/>
            <person name="Eiglmeier K."/>
            <person name="Gas S."/>
            <person name="Barry C.E. III"/>
            <person name="Tekaia F."/>
            <person name="Badcock K."/>
            <person name="Basham D."/>
            <person name="Brown D."/>
            <person name="Chillingworth T."/>
            <person name="Connor R."/>
            <person name="Davies R.M."/>
            <person name="Devlin K."/>
            <person name="Feltwell T."/>
            <person name="Gentles S."/>
            <person name="Hamlin N."/>
            <person name="Holroyd S."/>
            <person name="Hornsby T."/>
            <person name="Jagels K."/>
            <person name="Krogh A."/>
            <person name="McLean J."/>
            <person name="Moule S."/>
            <person name="Murphy L.D."/>
            <person name="Oliver S."/>
            <person name="Osborne J."/>
            <person name="Quail M.A."/>
            <person name="Rajandream M.A."/>
            <person name="Rogers J."/>
            <person name="Rutter S."/>
            <person name="Seeger K."/>
            <person name="Skelton S."/>
            <person name="Squares S."/>
            <person name="Squares R."/>
            <person name="Sulston J.E."/>
            <person name="Taylor K."/>
            <person name="Whitehead S."/>
            <person name="Barrell B.G."/>
        </authorList>
    </citation>
    <scope>NUCLEOTIDE SEQUENCE [LARGE SCALE GENOMIC DNA]</scope>
    <source>
        <strain>ATCC 25618 / H37Rv</strain>
    </source>
</reference>
<reference key="2">
    <citation type="journal article" date="2002" name="Microbiology">
        <title>Re-annotation of the genome sequence of Mycobacterium tuberculosis H37Rv.</title>
        <authorList>
            <person name="Camus J.-C."/>
            <person name="Pryor M.J."/>
            <person name="Medigue C."/>
            <person name="Cole S.T."/>
        </authorList>
    </citation>
    <scope>SEQUENCE REVISION</scope>
    <source>
        <strain>ATCC 25618 / H37Rv</strain>
    </source>
</reference>
<reference key="3">
    <citation type="journal article" date="2000" name="J. Biol. Chem.">
        <title>Phosphatidylinositol is an essential phospholipid of mycobacteria.</title>
        <authorList>
            <person name="Jackson M."/>
            <person name="Crick D.C."/>
            <person name="Brennan P.J."/>
        </authorList>
    </citation>
    <scope>PRELIMINARY FUNCTION</scope>
    <source>
        <strain>H37Rv</strain>
    </source>
</reference>
<reference key="4">
    <citation type="journal article" date="2011" name="Mol. Cell. Proteomics">
        <title>Proteogenomic analysis of Mycobacterium tuberculosis by high resolution mass spectrometry.</title>
        <authorList>
            <person name="Kelkar D.S."/>
            <person name="Kumar D."/>
            <person name="Kumar P."/>
            <person name="Balakrishnan L."/>
            <person name="Muthusamy B."/>
            <person name="Yadav A.K."/>
            <person name="Shrivastava P."/>
            <person name="Marimuthu A."/>
            <person name="Anand S."/>
            <person name="Sundaram H."/>
            <person name="Kingsbury R."/>
            <person name="Harsha H.C."/>
            <person name="Nair B."/>
            <person name="Prasad T.S."/>
            <person name="Chauhan D.S."/>
            <person name="Katoch K."/>
            <person name="Katoch V.M."/>
            <person name="Kumar P."/>
            <person name="Chaerkady R."/>
            <person name="Ramachandran S."/>
            <person name="Dash D."/>
            <person name="Pandey A."/>
        </authorList>
    </citation>
    <scope>IDENTIFICATION BY MASS SPECTROMETRY [LARGE SCALE ANALYSIS]</scope>
    <source>
        <strain>ATCC 25618 / H37Rv</strain>
    </source>
</reference>
<reference key="5">
    <citation type="journal article" date="2015" name="Nat. Commun.">
        <title>Structural basis for phosphatidylinositol-phosphate biosynthesis.</title>
        <authorList>
            <person name="Clarke O.B."/>
            <person name="Tomasek D."/>
            <person name="Jorge C.D."/>
            <person name="Dufrisne M.B."/>
            <person name="Kim M."/>
            <person name="Banerjee S."/>
            <person name="Rajashankar K.R."/>
            <person name="Shapiro L."/>
            <person name="Hendrickson W.A."/>
            <person name="Santos H."/>
            <person name="Mancia F."/>
        </authorList>
    </citation>
    <scope>FUNCTION</scope>
    <scope>CATALYTIC ACTIVITY</scope>
    <scope>BIOPHYSICOCHEMICAL PROPERTIES</scope>
    <scope>PATHWAY</scope>
</reference>
<reference evidence="10 11 12" key="6">
    <citation type="journal article" date="2019" name="Commun. Biol.">
        <title>Structure of Mycobacterium tuberculosis phosphatidylinositol phosphate synthase reveals mechanism of substrate binding and metal catalysis.</title>
        <authorList>
            <person name="Grave K."/>
            <person name="Bennett M.D."/>
            <person name="Hoegbom M."/>
        </authorList>
    </citation>
    <scope>X-RAY CRYSTALLOGRAPHY (1.8 ANGSTROMS) OF APOENZYME AND IN COMPLEXES WITH MAGNESIUM; CDP-DAG AND CITRATE-MANGANESE</scope>
    <scope>FUNCTION</scope>
    <scope>CATALYTIC ACTIVITY</scope>
    <scope>COFACTOR</scope>
    <scope>PATHWAY</scope>
    <scope>SUBUNIT</scope>
    <scope>SUBCELLULAR LOCATION</scope>
    <scope>REACTION MECHANISM</scope>
    <scope>ACTIVE SITE</scope>
    <scope>MUTAGENESIS OF ALA-90; ARG-94; TYR-133 AND ARG-137</scope>
    <source>
        <strain>H37Rv</strain>
    </source>
</reference>
<gene>
    <name evidence="5 9" type="primary">pgsA1</name>
    <name evidence="4" type="synonym">pgsA</name>
    <name type="ordered locus">Rv2612c</name>
</gene>
<evidence type="ECO:0000255" key="1">
    <source>
        <dbReference type="HAMAP-Rule" id="MF_02241"/>
    </source>
</evidence>
<evidence type="ECO:0000269" key="2">
    <source>
    </source>
</evidence>
<evidence type="ECO:0000269" key="3">
    <source>
    </source>
</evidence>
<evidence type="ECO:0000303" key="4">
    <source>
    </source>
</evidence>
<evidence type="ECO:0000303" key="5">
    <source>
    </source>
</evidence>
<evidence type="ECO:0000305" key="6"/>
<evidence type="ECO:0000305" key="7">
    <source>
    </source>
</evidence>
<evidence type="ECO:0000305" key="8">
    <source>
    </source>
</evidence>
<evidence type="ECO:0000312" key="9">
    <source>
        <dbReference type="EMBL" id="CCP45409.1"/>
    </source>
</evidence>
<evidence type="ECO:0007744" key="10">
    <source>
        <dbReference type="PDB" id="6H53"/>
    </source>
</evidence>
<evidence type="ECO:0007744" key="11">
    <source>
        <dbReference type="PDB" id="6H59"/>
    </source>
</evidence>
<evidence type="ECO:0007744" key="12">
    <source>
        <dbReference type="PDB" id="6H5A"/>
    </source>
</evidence>
<evidence type="ECO:0007829" key="13">
    <source>
        <dbReference type="PDB" id="6H59"/>
    </source>
</evidence>
<evidence type="ECO:0007829" key="14">
    <source>
        <dbReference type="PDB" id="6H5A"/>
    </source>
</evidence>
<protein>
    <recommendedName>
        <fullName evidence="5">Phosphatidylinositol phosphate synthase</fullName>
        <shortName evidence="5">PIP synthase</shortName>
        <ecNumber evidence="2 3">2.7.8.-</ecNumber>
    </recommendedName>
    <alternativeName>
        <fullName>CDP-diacylglycerol--D-myo-inositol-3-phosphate 3-phosphatidyltransferase</fullName>
    </alternativeName>
</protein>
<name>PIPS_MYCTU</name>
<comment type="function">
    <text evidence="2 3">Catalyzes the conjugation of the 1'-hydroxyl group of D-myo-inositol-3-phosphate (also named L-myo-inositol-1-phosphate) with a lipid tail of cytidine diphosphate diacylglycerol (CDP-DAG), forming phosphatidylinositol phosphate (PIP) and CMP. PIP is a precursor of phosphatidylinositol (PI) which is an essential lipid for mycobacteria required for formation of their cell wall.</text>
</comment>
<comment type="catalytic activity">
    <reaction evidence="2 3">
        <text>a CDP-1,2-diacyl-sn-glycerol + 1D-myo-inositol 3-phosphate = a 1,2-diacyl-sn-glycero-3-phospho-(1D-myo-inositol-3-phosphate) + CMP + H(+)</text>
        <dbReference type="Rhea" id="RHEA:60504"/>
        <dbReference type="ChEBI" id="CHEBI:15378"/>
        <dbReference type="ChEBI" id="CHEBI:58088"/>
        <dbReference type="ChEBI" id="CHEBI:58332"/>
        <dbReference type="ChEBI" id="CHEBI:58401"/>
        <dbReference type="ChEBI" id="CHEBI:60377"/>
    </reaction>
</comment>
<comment type="catalytic activity">
    <reaction evidence="2 3">
        <text>1,2-di-(9Z-octadecenoyl)-sn-glycero-3-cytidine-5'-diphosphate + 1D-myo-inositol 3-phosphate = 1,2-di-(9Z-octadecenoyl)-sn-glycero-3-phospho-(1D-myo-inositol-3-phosphate) + CMP + H(+)</text>
        <dbReference type="Rhea" id="RHEA:61216"/>
        <dbReference type="ChEBI" id="CHEBI:15378"/>
        <dbReference type="ChEBI" id="CHEBI:58401"/>
        <dbReference type="ChEBI" id="CHEBI:60377"/>
        <dbReference type="ChEBI" id="CHEBI:85356"/>
        <dbReference type="ChEBI" id="CHEBI:144472"/>
    </reaction>
</comment>
<comment type="cofactor">
    <cofactor evidence="3">
        <name>Mg(2+)</name>
        <dbReference type="ChEBI" id="CHEBI:18420"/>
    </cofactor>
    <text evidence="3">Contains a di-nuclear catalytic Mg(2+) center.</text>
</comment>
<comment type="biophysicochemical properties">
    <kinetics>
        <KM evidence="2">243 uM for 1D-myo-inositol 3-phosphate</KM>
        <KM evidence="2">60 uM for CDP-dioleoylglycerol</KM>
        <Vmax evidence="2">39.0 nmol/min/mg enzyme</Vmax>
    </kinetics>
</comment>
<comment type="pathway">
    <text evidence="2 3">Phospholipid metabolism; phosphatidylinositol phosphate biosynthesis.</text>
</comment>
<comment type="subunit">
    <text evidence="8">Homodimer.</text>
</comment>
<comment type="subcellular location">
    <subcellularLocation>
        <location evidence="3">Cell membrane</location>
        <topology evidence="3">Multi-pass membrane protein</topology>
    </subcellularLocation>
</comment>
<comment type="miscellaneous">
    <text evidence="8">M.tuberculosis PgsA1 has been identified as a promising candidate for drug development because of its vital role in growth and proliferation of the pathogen as well as the differences between eukaryotic and mycobacterial PI biosynthesis pathways.</text>
</comment>
<comment type="similarity">
    <text evidence="1 6">Belongs to the CDP-alcohol phosphatidyltransferase class-I family.</text>
</comment>
<comment type="caution">
    <text evidence="7">Was orginally thought to be a phosphatidylinositol (PI) synthase.</text>
</comment>